<gene>
    <name evidence="1" type="primary">tdh</name>
    <name type="ordered locus">EcolC_0092</name>
</gene>
<evidence type="ECO:0000255" key="1">
    <source>
        <dbReference type="HAMAP-Rule" id="MF_00627"/>
    </source>
</evidence>
<feature type="chain" id="PRO_1000082610" description="L-threonine 3-dehydrogenase">
    <location>
        <begin position="1"/>
        <end position="341"/>
    </location>
</feature>
<feature type="active site" description="Charge relay system" evidence="1">
    <location>
        <position position="40"/>
    </location>
</feature>
<feature type="active site" description="Charge relay system" evidence="1">
    <location>
        <position position="43"/>
    </location>
</feature>
<feature type="binding site" evidence="1">
    <location>
        <position position="38"/>
    </location>
    <ligand>
        <name>Zn(2+)</name>
        <dbReference type="ChEBI" id="CHEBI:29105"/>
        <label>1</label>
        <note>catalytic</note>
    </ligand>
</feature>
<feature type="binding site" evidence="1">
    <location>
        <position position="63"/>
    </location>
    <ligand>
        <name>Zn(2+)</name>
        <dbReference type="ChEBI" id="CHEBI:29105"/>
        <label>1</label>
        <note>catalytic</note>
    </ligand>
</feature>
<feature type="binding site" evidence="1">
    <location>
        <position position="64"/>
    </location>
    <ligand>
        <name>Zn(2+)</name>
        <dbReference type="ChEBI" id="CHEBI:29105"/>
        <label>1</label>
        <note>catalytic</note>
    </ligand>
</feature>
<feature type="binding site" evidence="1">
    <location>
        <position position="93"/>
    </location>
    <ligand>
        <name>Zn(2+)</name>
        <dbReference type="ChEBI" id="CHEBI:29105"/>
        <label>2</label>
    </ligand>
</feature>
<feature type="binding site" evidence="1">
    <location>
        <position position="96"/>
    </location>
    <ligand>
        <name>Zn(2+)</name>
        <dbReference type="ChEBI" id="CHEBI:29105"/>
        <label>2</label>
    </ligand>
</feature>
<feature type="binding site" evidence="1">
    <location>
        <position position="99"/>
    </location>
    <ligand>
        <name>Zn(2+)</name>
        <dbReference type="ChEBI" id="CHEBI:29105"/>
        <label>2</label>
    </ligand>
</feature>
<feature type="binding site" evidence="1">
    <location>
        <position position="107"/>
    </location>
    <ligand>
        <name>Zn(2+)</name>
        <dbReference type="ChEBI" id="CHEBI:29105"/>
        <label>2</label>
    </ligand>
</feature>
<feature type="binding site" evidence="1">
    <location>
        <position position="175"/>
    </location>
    <ligand>
        <name>NAD(+)</name>
        <dbReference type="ChEBI" id="CHEBI:57540"/>
    </ligand>
</feature>
<feature type="binding site" evidence="1">
    <location>
        <position position="195"/>
    </location>
    <ligand>
        <name>NAD(+)</name>
        <dbReference type="ChEBI" id="CHEBI:57540"/>
    </ligand>
</feature>
<feature type="binding site" evidence="1">
    <location>
        <position position="200"/>
    </location>
    <ligand>
        <name>NAD(+)</name>
        <dbReference type="ChEBI" id="CHEBI:57540"/>
    </ligand>
</feature>
<feature type="binding site" evidence="1">
    <location>
        <begin position="262"/>
        <end position="264"/>
    </location>
    <ligand>
        <name>NAD(+)</name>
        <dbReference type="ChEBI" id="CHEBI:57540"/>
    </ligand>
</feature>
<feature type="binding site" evidence="1">
    <location>
        <begin position="286"/>
        <end position="287"/>
    </location>
    <ligand>
        <name>NAD(+)</name>
        <dbReference type="ChEBI" id="CHEBI:57540"/>
    </ligand>
</feature>
<feature type="site" description="Important for catalytic activity for the proton relay mechanism but does not participate directly in the coordination of zinc atom" evidence="1">
    <location>
        <position position="148"/>
    </location>
</feature>
<organism>
    <name type="scientific">Escherichia coli (strain ATCC 8739 / DSM 1576 / NBRC 3972 / NCIMB 8545 / WDCM 00012 / Crooks)</name>
    <dbReference type="NCBI Taxonomy" id="481805"/>
    <lineage>
        <taxon>Bacteria</taxon>
        <taxon>Pseudomonadati</taxon>
        <taxon>Pseudomonadota</taxon>
        <taxon>Gammaproteobacteria</taxon>
        <taxon>Enterobacterales</taxon>
        <taxon>Enterobacteriaceae</taxon>
        <taxon>Escherichia</taxon>
    </lineage>
</organism>
<proteinExistence type="inferred from homology"/>
<keyword id="KW-0963">Cytoplasm</keyword>
<keyword id="KW-0479">Metal-binding</keyword>
<keyword id="KW-0520">NAD</keyword>
<keyword id="KW-0560">Oxidoreductase</keyword>
<keyword id="KW-0862">Zinc</keyword>
<name>TDH_ECOLC</name>
<comment type="function">
    <text evidence="1">Catalyzes the NAD(+)-dependent oxidation of L-threonine to 2-amino-3-ketobutyrate.</text>
</comment>
<comment type="catalytic activity">
    <reaction evidence="1">
        <text>L-threonine + NAD(+) = (2S)-2-amino-3-oxobutanoate + NADH + H(+)</text>
        <dbReference type="Rhea" id="RHEA:13161"/>
        <dbReference type="ChEBI" id="CHEBI:15378"/>
        <dbReference type="ChEBI" id="CHEBI:57540"/>
        <dbReference type="ChEBI" id="CHEBI:57926"/>
        <dbReference type="ChEBI" id="CHEBI:57945"/>
        <dbReference type="ChEBI" id="CHEBI:78948"/>
        <dbReference type="EC" id="1.1.1.103"/>
    </reaction>
</comment>
<comment type="cofactor">
    <cofactor evidence="1">
        <name>Zn(2+)</name>
        <dbReference type="ChEBI" id="CHEBI:29105"/>
    </cofactor>
    <text evidence="1">Binds 2 Zn(2+) ions per subunit.</text>
</comment>
<comment type="pathway">
    <text evidence="1">Amino-acid degradation; L-threonine degradation via oxydo-reductase pathway; glycine from L-threonine: step 1/2.</text>
</comment>
<comment type="subunit">
    <text evidence="1">Homotetramer.</text>
</comment>
<comment type="subcellular location">
    <subcellularLocation>
        <location evidence="1">Cytoplasm</location>
    </subcellularLocation>
</comment>
<comment type="similarity">
    <text evidence="1">Belongs to the zinc-containing alcohol dehydrogenase family.</text>
</comment>
<reference key="1">
    <citation type="submission" date="2008-02" db="EMBL/GenBank/DDBJ databases">
        <title>Complete sequence of Escherichia coli C str. ATCC 8739.</title>
        <authorList>
            <person name="Copeland A."/>
            <person name="Lucas S."/>
            <person name="Lapidus A."/>
            <person name="Glavina del Rio T."/>
            <person name="Dalin E."/>
            <person name="Tice H."/>
            <person name="Bruce D."/>
            <person name="Goodwin L."/>
            <person name="Pitluck S."/>
            <person name="Kiss H."/>
            <person name="Brettin T."/>
            <person name="Detter J.C."/>
            <person name="Han C."/>
            <person name="Kuske C.R."/>
            <person name="Schmutz J."/>
            <person name="Larimer F."/>
            <person name="Land M."/>
            <person name="Hauser L."/>
            <person name="Kyrpides N."/>
            <person name="Mikhailova N."/>
            <person name="Ingram L."/>
            <person name="Richardson P."/>
        </authorList>
    </citation>
    <scope>NUCLEOTIDE SEQUENCE [LARGE SCALE GENOMIC DNA]</scope>
    <source>
        <strain>ATCC 8739 / DSM 1576 / NBRC 3972 / NCIMB 8545 / WDCM 00012 / Crooks</strain>
    </source>
</reference>
<protein>
    <recommendedName>
        <fullName evidence="1">L-threonine 3-dehydrogenase</fullName>
        <shortName evidence="1">TDH</shortName>
        <ecNumber evidence="1">1.1.1.103</ecNumber>
    </recommendedName>
</protein>
<sequence length="341" mass="37255">MKALSKLKAEEGIWMTDVPVPELGHNDLLIKIRKTAICGTDVHIYNWDEWSQKTIPVPMVVGHEYVGEVVGIGQEVKGFKIGDRVSGEGHITCGHCRNCRGGRTHLCRNTIGVGVNRPGCFAEYLVIPAFNAFKIPDNISDDLASIFDPFGNAVHTALSFDLVGEDVLVSGAGPIGIMAAAVAKHVGARNVVITDVNEYRLELARKMGITRAVNVAKENLNDVMAELGMTEGFDVGLEMSGAPPAFRTMLDTMNHGGRIAMLGIPPSDMSIDWTKVIFKGLFIKGIYGREMFETWYKMAALIQSGLDLSPIITHRFSIDDFQKGFDAMRSGQSGKVILSWD</sequence>
<dbReference type="EC" id="1.1.1.103" evidence="1"/>
<dbReference type="EMBL" id="CP000946">
    <property type="protein sequence ID" value="ACA75778.1"/>
    <property type="molecule type" value="Genomic_DNA"/>
</dbReference>
<dbReference type="RefSeq" id="WP_000646014.1">
    <property type="nucleotide sequence ID" value="NZ_MTFT01000034.1"/>
</dbReference>
<dbReference type="SMR" id="B1IZH4"/>
<dbReference type="GeneID" id="93778332"/>
<dbReference type="KEGG" id="ecl:EcolC_0092"/>
<dbReference type="HOGENOM" id="CLU_026673_11_0_6"/>
<dbReference type="UniPathway" id="UPA00046">
    <property type="reaction ID" value="UER00505"/>
</dbReference>
<dbReference type="GO" id="GO:0005737">
    <property type="term" value="C:cytoplasm"/>
    <property type="evidence" value="ECO:0007669"/>
    <property type="project" value="UniProtKB-SubCell"/>
</dbReference>
<dbReference type="GO" id="GO:0008743">
    <property type="term" value="F:L-threonine 3-dehydrogenase activity"/>
    <property type="evidence" value="ECO:0007669"/>
    <property type="project" value="UniProtKB-UniRule"/>
</dbReference>
<dbReference type="GO" id="GO:0008270">
    <property type="term" value="F:zinc ion binding"/>
    <property type="evidence" value="ECO:0007669"/>
    <property type="project" value="UniProtKB-UniRule"/>
</dbReference>
<dbReference type="GO" id="GO:0019518">
    <property type="term" value="P:L-threonine catabolic process to glycine"/>
    <property type="evidence" value="ECO:0007669"/>
    <property type="project" value="UniProtKB-UniPathway"/>
</dbReference>
<dbReference type="FunFam" id="3.40.50.720:FF:000059">
    <property type="entry name" value="L-threonine 3-dehydrogenase"/>
    <property type="match status" value="1"/>
</dbReference>
<dbReference type="Gene3D" id="3.90.180.10">
    <property type="entry name" value="Medium-chain alcohol dehydrogenases, catalytic domain"/>
    <property type="match status" value="1"/>
</dbReference>
<dbReference type="Gene3D" id="3.40.50.720">
    <property type="entry name" value="NAD(P)-binding Rossmann-like Domain"/>
    <property type="match status" value="1"/>
</dbReference>
<dbReference type="HAMAP" id="MF_00627">
    <property type="entry name" value="Thr_dehydrog"/>
    <property type="match status" value="1"/>
</dbReference>
<dbReference type="InterPro" id="IPR013149">
    <property type="entry name" value="ADH-like_C"/>
</dbReference>
<dbReference type="InterPro" id="IPR013154">
    <property type="entry name" value="ADH-like_N"/>
</dbReference>
<dbReference type="InterPro" id="IPR002328">
    <property type="entry name" value="ADH_Zn_CS"/>
</dbReference>
<dbReference type="InterPro" id="IPR011032">
    <property type="entry name" value="GroES-like_sf"/>
</dbReference>
<dbReference type="InterPro" id="IPR004627">
    <property type="entry name" value="L-Threonine_3-DHase"/>
</dbReference>
<dbReference type="InterPro" id="IPR036291">
    <property type="entry name" value="NAD(P)-bd_dom_sf"/>
</dbReference>
<dbReference type="InterPro" id="IPR020843">
    <property type="entry name" value="PKS_ER"/>
</dbReference>
<dbReference type="InterPro" id="IPR050129">
    <property type="entry name" value="Zn_alcohol_dh"/>
</dbReference>
<dbReference type="NCBIfam" id="NF003808">
    <property type="entry name" value="PRK05396.1"/>
    <property type="match status" value="1"/>
</dbReference>
<dbReference type="NCBIfam" id="TIGR00692">
    <property type="entry name" value="tdh"/>
    <property type="match status" value="1"/>
</dbReference>
<dbReference type="PANTHER" id="PTHR43401">
    <property type="entry name" value="L-THREONINE 3-DEHYDROGENASE"/>
    <property type="match status" value="1"/>
</dbReference>
<dbReference type="PANTHER" id="PTHR43401:SF2">
    <property type="entry name" value="L-THREONINE 3-DEHYDROGENASE"/>
    <property type="match status" value="1"/>
</dbReference>
<dbReference type="Pfam" id="PF08240">
    <property type="entry name" value="ADH_N"/>
    <property type="match status" value="1"/>
</dbReference>
<dbReference type="Pfam" id="PF00107">
    <property type="entry name" value="ADH_zinc_N"/>
    <property type="match status" value="1"/>
</dbReference>
<dbReference type="SMART" id="SM00829">
    <property type="entry name" value="PKS_ER"/>
    <property type="match status" value="1"/>
</dbReference>
<dbReference type="SUPFAM" id="SSF50129">
    <property type="entry name" value="GroES-like"/>
    <property type="match status" value="1"/>
</dbReference>
<dbReference type="SUPFAM" id="SSF51735">
    <property type="entry name" value="NAD(P)-binding Rossmann-fold domains"/>
    <property type="match status" value="1"/>
</dbReference>
<dbReference type="PROSITE" id="PS00059">
    <property type="entry name" value="ADH_ZINC"/>
    <property type="match status" value="1"/>
</dbReference>
<accession>B1IZH4</accession>